<evidence type="ECO:0000255" key="1">
    <source>
        <dbReference type="HAMAP-Rule" id="MF_00843"/>
    </source>
</evidence>
<keyword id="KW-0998">Cell outer membrane</keyword>
<keyword id="KW-0134">Cell wall</keyword>
<keyword id="KW-0175">Coiled coil</keyword>
<keyword id="KW-0449">Lipoprotein</keyword>
<keyword id="KW-0472">Membrane</keyword>
<keyword id="KW-0564">Palmitate</keyword>
<keyword id="KW-0572">Peptidoglycan-anchor</keyword>
<keyword id="KW-1185">Reference proteome</keyword>
<keyword id="KW-0677">Repeat</keyword>
<keyword id="KW-0964">Secreted</keyword>
<keyword id="KW-0732">Signal</keyword>
<dbReference type="EMBL" id="BX950851">
    <property type="protein sequence ID" value="CAG74769.1"/>
    <property type="molecule type" value="Genomic_DNA"/>
</dbReference>
<dbReference type="RefSeq" id="WP_005970385.1">
    <property type="nucleotide sequence ID" value="NC_004547.2"/>
</dbReference>
<dbReference type="SMR" id="Q6D622"/>
<dbReference type="STRING" id="218491.ECA1866"/>
<dbReference type="KEGG" id="eca:ECA1866"/>
<dbReference type="eggNOG" id="COG4238">
    <property type="taxonomic scope" value="Bacteria"/>
</dbReference>
<dbReference type="HOGENOM" id="CLU_166934_2_1_6"/>
<dbReference type="OrthoDB" id="6567756at2"/>
<dbReference type="Proteomes" id="UP000007966">
    <property type="component" value="Chromosome"/>
</dbReference>
<dbReference type="GO" id="GO:0009279">
    <property type="term" value="C:cell outer membrane"/>
    <property type="evidence" value="ECO:0007669"/>
    <property type="project" value="UniProtKB-SubCell"/>
</dbReference>
<dbReference type="GO" id="GO:0005576">
    <property type="term" value="C:extracellular region"/>
    <property type="evidence" value="ECO:0007669"/>
    <property type="project" value="UniProtKB-KW"/>
</dbReference>
<dbReference type="GO" id="GO:0008289">
    <property type="term" value="F:lipid binding"/>
    <property type="evidence" value="ECO:0007669"/>
    <property type="project" value="UniProtKB-UniRule"/>
</dbReference>
<dbReference type="GO" id="GO:0042834">
    <property type="term" value="F:peptidoglycan binding"/>
    <property type="evidence" value="ECO:0007669"/>
    <property type="project" value="UniProtKB-UniRule"/>
</dbReference>
<dbReference type="GO" id="GO:0030258">
    <property type="term" value="P:lipid modification"/>
    <property type="evidence" value="ECO:0007669"/>
    <property type="project" value="UniProtKB-UniRule"/>
</dbReference>
<dbReference type="GO" id="GO:0043580">
    <property type="term" value="P:periplasmic space organization"/>
    <property type="evidence" value="ECO:0007669"/>
    <property type="project" value="UniProtKB-UniRule"/>
</dbReference>
<dbReference type="FunFam" id="1.20.5.190:FF:000002">
    <property type="entry name" value="Major outer membrane lipoprotein"/>
    <property type="match status" value="1"/>
</dbReference>
<dbReference type="Gene3D" id="1.20.5.190">
    <property type="match status" value="1"/>
</dbReference>
<dbReference type="HAMAP" id="MF_00843">
    <property type="entry name" value="Lpp"/>
    <property type="match status" value="1"/>
</dbReference>
<dbReference type="InterPro" id="IPR006817">
    <property type="entry name" value="Lipoprotein_leucine-zipper_dom"/>
</dbReference>
<dbReference type="InterPro" id="IPR016367">
    <property type="entry name" value="MOM_Lpp"/>
</dbReference>
<dbReference type="NCBIfam" id="NF040598">
    <property type="entry name" value="Ala_zip_lipo"/>
    <property type="match status" value="1"/>
</dbReference>
<dbReference type="NCBIfam" id="NF011925">
    <property type="entry name" value="PRK15396.1"/>
    <property type="match status" value="1"/>
</dbReference>
<dbReference type="PANTHER" id="PTHR38763:SF1">
    <property type="entry name" value="MAJOR OUTER MEMBRANE LIPOPROTEIN LPP"/>
    <property type="match status" value="1"/>
</dbReference>
<dbReference type="PANTHER" id="PTHR38763">
    <property type="entry name" value="MAJOR OUTER MEMBRANE PROLIPOPROTEIN LPP"/>
    <property type="match status" value="1"/>
</dbReference>
<dbReference type="Pfam" id="PF04728">
    <property type="entry name" value="LPP"/>
    <property type="match status" value="1"/>
</dbReference>
<dbReference type="PIRSF" id="PIRSF002855">
    <property type="entry name" value="Murein-lipoprotein"/>
    <property type="match status" value="1"/>
</dbReference>
<dbReference type="SUPFAM" id="SSF58042">
    <property type="entry name" value="Outer membrane lipoprotein"/>
    <property type="match status" value="1"/>
</dbReference>
<dbReference type="PROSITE" id="PS51257">
    <property type="entry name" value="PROKAR_LIPOPROTEIN"/>
    <property type="match status" value="1"/>
</dbReference>
<gene>
    <name evidence="1" type="primary">lpp</name>
    <name type="ordered locus">ECA1866</name>
</gene>
<comment type="function">
    <text evidence="1">A highly abundant outer membrane lipoprotein that controls the distance between the inner and outer membranes. The only protein known to be covalently linked to the peptidoglycan network (PGN). Also non-covalently binds the PGN. The link between the cell outer membrane and PGN contributes to maintenance of the structural and functional integrity of the cell envelope, and maintains the correct distance between the PGN and the outer membrane.</text>
</comment>
<comment type="subunit">
    <text evidence="1">Homotrimer.</text>
</comment>
<comment type="subcellular location">
    <subcellularLocation>
        <location evidence="1">Cell outer membrane</location>
        <topology evidence="1">Lipid-anchor</topology>
        <orientation evidence="1">Periplasmic side</orientation>
    </subcellularLocation>
    <subcellularLocation>
        <location evidence="1">Secreted</location>
        <location evidence="1">Cell wall</location>
        <topology evidence="1">Peptidoglycan-anchor</topology>
    </subcellularLocation>
    <text evidence="1">Attached via its lipidated N-terminus to the inner leaflet of the outer membrane. Attached to the peptidoglycan network (PGN) via its C-terminus.</text>
</comment>
<comment type="similarity">
    <text evidence="1">Belongs to the Lpp family.</text>
</comment>
<name>LPP_PECAS</name>
<proteinExistence type="inferred from homology"/>
<protein>
    <recommendedName>
        <fullName evidence="1">Major outer membrane lipoprotein Lpp</fullName>
    </recommendedName>
</protein>
<feature type="signal peptide" evidence="1">
    <location>
        <begin position="1"/>
        <end position="20"/>
    </location>
</feature>
<feature type="chain" id="PRO_0000018335" description="Major outer membrane lipoprotein Lpp" evidence="1">
    <location>
        <begin position="21"/>
        <end position="78"/>
    </location>
</feature>
<feature type="repeat" evidence="1">
    <location>
        <begin position="24"/>
        <end position="34"/>
    </location>
</feature>
<feature type="repeat" evidence="1">
    <location>
        <begin position="38"/>
        <end position="48"/>
    </location>
</feature>
<feature type="coiled-coil region" evidence="1">
    <location>
        <begin position="27"/>
        <end position="75"/>
    </location>
</feature>
<feature type="modified residue" description="N6-murein peptidoglycan lysine" evidence="1">
    <location>
        <position position="78"/>
    </location>
</feature>
<feature type="lipid moiety-binding region" description="N-palmitoyl cysteine" evidence="1">
    <location>
        <position position="21"/>
    </location>
</feature>
<feature type="lipid moiety-binding region" description="S-diacylglycerol cysteine" evidence="1">
    <location>
        <position position="21"/>
    </location>
</feature>
<reference key="1">
    <citation type="journal article" date="2004" name="Proc. Natl. Acad. Sci. U.S.A.">
        <title>Genome sequence of the enterobacterial phytopathogen Erwinia carotovora subsp. atroseptica and characterization of virulence factors.</title>
        <authorList>
            <person name="Bell K.S."/>
            <person name="Sebaihia M."/>
            <person name="Pritchard L."/>
            <person name="Holden M.T.G."/>
            <person name="Hyman L.J."/>
            <person name="Holeva M.C."/>
            <person name="Thomson N.R."/>
            <person name="Bentley S.D."/>
            <person name="Churcher L.J.C."/>
            <person name="Mungall K."/>
            <person name="Atkin R."/>
            <person name="Bason N."/>
            <person name="Brooks K."/>
            <person name="Chillingworth T."/>
            <person name="Clark K."/>
            <person name="Doggett J."/>
            <person name="Fraser A."/>
            <person name="Hance Z."/>
            <person name="Hauser H."/>
            <person name="Jagels K."/>
            <person name="Moule S."/>
            <person name="Norbertczak H."/>
            <person name="Ormond D."/>
            <person name="Price C."/>
            <person name="Quail M.A."/>
            <person name="Sanders M."/>
            <person name="Walker D."/>
            <person name="Whitehead S."/>
            <person name="Salmond G.P.C."/>
            <person name="Birch P.R.J."/>
            <person name="Parkhill J."/>
            <person name="Toth I.K."/>
        </authorList>
    </citation>
    <scope>NUCLEOTIDE SEQUENCE [LARGE SCALE GENOMIC DNA]</scope>
    <source>
        <strain>SCRI 1043 / ATCC BAA-672</strain>
    </source>
</reference>
<accession>Q6D622</accession>
<organism>
    <name type="scientific">Pectobacterium atrosepticum (strain SCRI 1043 / ATCC BAA-672)</name>
    <name type="common">Erwinia carotovora subsp. atroseptica</name>
    <dbReference type="NCBI Taxonomy" id="218491"/>
    <lineage>
        <taxon>Bacteria</taxon>
        <taxon>Pseudomonadati</taxon>
        <taxon>Pseudomonadota</taxon>
        <taxon>Gammaproteobacteria</taxon>
        <taxon>Enterobacterales</taxon>
        <taxon>Pectobacteriaceae</taxon>
        <taxon>Pectobacterium</taxon>
    </lineage>
</organism>
<sequence>MNRTKLVLGAVILGSTLLAGCSSNAKIDQLSSDVQTLNAKVDQLSNDVNAIRSDVQAAKDDAARANQRLDNQVRTYKK</sequence>